<dbReference type="EMBL" id="CR382135">
    <property type="protein sequence ID" value="CAG86502.1"/>
    <property type="molecule type" value="Genomic_DNA"/>
</dbReference>
<dbReference type="RefSeq" id="XP_458420.1">
    <property type="nucleotide sequence ID" value="XM_458420.1"/>
</dbReference>
<dbReference type="SMR" id="Q6BTP9"/>
<dbReference type="FunCoup" id="Q6BTP9">
    <property type="interactions" value="909"/>
</dbReference>
<dbReference type="STRING" id="284592.Q6BTP9"/>
<dbReference type="GeneID" id="2900035"/>
<dbReference type="KEGG" id="dha:DEHA2C16830g"/>
<dbReference type="VEuPathDB" id="FungiDB:DEHA2C16830g"/>
<dbReference type="eggNOG" id="KOG3003">
    <property type="taxonomic scope" value="Eukaryota"/>
</dbReference>
<dbReference type="HOGENOM" id="CLU_057217_0_0_1"/>
<dbReference type="InParanoid" id="Q6BTP9"/>
<dbReference type="OMA" id="PHRHQAI"/>
<dbReference type="OrthoDB" id="201635at2759"/>
<dbReference type="Proteomes" id="UP000000599">
    <property type="component" value="Chromosome C"/>
</dbReference>
<dbReference type="GO" id="GO:0001405">
    <property type="term" value="C:PAM complex, Tim23 associated import motor"/>
    <property type="evidence" value="ECO:0007669"/>
    <property type="project" value="EnsemblFungi"/>
</dbReference>
<dbReference type="GO" id="GO:0000774">
    <property type="term" value="F:adenyl-nucleotide exchange factor activity"/>
    <property type="evidence" value="ECO:0007669"/>
    <property type="project" value="EnsemblFungi"/>
</dbReference>
<dbReference type="GO" id="GO:0042803">
    <property type="term" value="F:protein homodimerization activity"/>
    <property type="evidence" value="ECO:0007669"/>
    <property type="project" value="InterPro"/>
</dbReference>
<dbReference type="GO" id="GO:0051087">
    <property type="term" value="F:protein-folding chaperone binding"/>
    <property type="evidence" value="ECO:0007669"/>
    <property type="project" value="InterPro"/>
</dbReference>
<dbReference type="GO" id="GO:0051082">
    <property type="term" value="F:unfolded protein binding"/>
    <property type="evidence" value="ECO:0007669"/>
    <property type="project" value="TreeGrafter"/>
</dbReference>
<dbReference type="GO" id="GO:0030150">
    <property type="term" value="P:protein import into mitochondrial matrix"/>
    <property type="evidence" value="ECO:0007669"/>
    <property type="project" value="EnsemblFungi"/>
</dbReference>
<dbReference type="GO" id="GO:0042026">
    <property type="term" value="P:protein refolding"/>
    <property type="evidence" value="ECO:0007669"/>
    <property type="project" value="EnsemblFungi"/>
</dbReference>
<dbReference type="CDD" id="cd00446">
    <property type="entry name" value="GrpE"/>
    <property type="match status" value="1"/>
</dbReference>
<dbReference type="FunFam" id="2.30.22.10:FF:000002">
    <property type="entry name" value="GrpE protein homolog"/>
    <property type="match status" value="1"/>
</dbReference>
<dbReference type="FunFam" id="3.90.20.20:FF:000011">
    <property type="entry name" value="GrpE protein homolog"/>
    <property type="match status" value="1"/>
</dbReference>
<dbReference type="Gene3D" id="3.90.20.20">
    <property type="match status" value="1"/>
</dbReference>
<dbReference type="Gene3D" id="2.30.22.10">
    <property type="entry name" value="Head domain of nucleotide exchange factor GrpE"/>
    <property type="match status" value="1"/>
</dbReference>
<dbReference type="HAMAP" id="MF_01151">
    <property type="entry name" value="GrpE"/>
    <property type="match status" value="1"/>
</dbReference>
<dbReference type="InterPro" id="IPR000740">
    <property type="entry name" value="GrpE"/>
</dbReference>
<dbReference type="InterPro" id="IPR013805">
    <property type="entry name" value="GrpE_coiled_coil"/>
</dbReference>
<dbReference type="InterPro" id="IPR009012">
    <property type="entry name" value="GrpE_head"/>
</dbReference>
<dbReference type="PANTHER" id="PTHR21237">
    <property type="entry name" value="GRPE PROTEIN"/>
    <property type="match status" value="1"/>
</dbReference>
<dbReference type="PANTHER" id="PTHR21237:SF23">
    <property type="entry name" value="GRPE PROTEIN HOMOLOG, MITOCHONDRIAL"/>
    <property type="match status" value="1"/>
</dbReference>
<dbReference type="Pfam" id="PF01025">
    <property type="entry name" value="GrpE"/>
    <property type="match status" value="1"/>
</dbReference>
<dbReference type="PRINTS" id="PR00773">
    <property type="entry name" value="GRPEPROTEIN"/>
</dbReference>
<dbReference type="SUPFAM" id="SSF58014">
    <property type="entry name" value="Coiled-coil domain of nucleotide exchange factor GrpE"/>
    <property type="match status" value="1"/>
</dbReference>
<dbReference type="SUPFAM" id="SSF51064">
    <property type="entry name" value="Head domain of nucleotide exchange factor GrpE"/>
    <property type="match status" value="1"/>
</dbReference>
<dbReference type="PROSITE" id="PS01071">
    <property type="entry name" value="GRPE"/>
    <property type="match status" value="1"/>
</dbReference>
<comment type="function">
    <text evidence="1">Essential component of the PAM complex, a complex required for the translocation of transit peptide-containing proteins from the inner membrane into the mitochondrial matrix in an ATP-dependent manner. Seems to control the nucleotide-dependent binding of SSC1 to substrate proteins (By similarity).</text>
</comment>
<comment type="subunit">
    <text evidence="1">Component of the PAM complex, at least composed of mtHsp70, MGE1, TIM44, PAM16, PAM17 and PAM18.</text>
</comment>
<comment type="subcellular location">
    <subcellularLocation>
        <location evidence="1">Mitochondrion matrix</location>
    </subcellularLocation>
</comment>
<comment type="similarity">
    <text evidence="4">Belongs to the GrpE family.</text>
</comment>
<sequence>MQRALLSSLRRSAGIRSGVNSMRVVRPTVLAPRMSMIRFASTEASKKEGKEDKAEAQGSQEPETAAETNKEAEGAKVEVSEIDELKAKLTKKDRELADMKNHYARAIADFRNLQESTKLEKQKARDFALQKFAKDLLESVDNFDLALNAVKEDTLKNNSEVKNLYDGVDMTRNVFEKTLARHGIEKVDPIGEQFDPNQHEATFEIAQPDKEPGTVFHVQQNGYTLNSRVLRPAKVGVVKDAEN</sequence>
<name>GRPE_DEBHA</name>
<evidence type="ECO:0000250" key="1"/>
<evidence type="ECO:0000255" key="2"/>
<evidence type="ECO:0000256" key="3">
    <source>
        <dbReference type="SAM" id="MobiDB-lite"/>
    </source>
</evidence>
<evidence type="ECO:0000305" key="4"/>
<accession>Q6BTP9</accession>
<gene>
    <name type="primary">mge1</name>
    <name type="ordered locus">DEHA2C16830g</name>
</gene>
<feature type="transit peptide" description="Mitochondrion" evidence="2">
    <location>
        <begin position="1"/>
        <end status="unknown"/>
    </location>
</feature>
<feature type="chain" id="PRO_0000013042" description="GrpE protein homolog, mitochondrial">
    <location>
        <begin status="unknown"/>
        <end position="243"/>
    </location>
</feature>
<feature type="region of interest" description="Disordered" evidence="3">
    <location>
        <begin position="42"/>
        <end position="75"/>
    </location>
</feature>
<feature type="compositionally biased region" description="Basic and acidic residues" evidence="3">
    <location>
        <begin position="44"/>
        <end position="55"/>
    </location>
</feature>
<reference key="1">
    <citation type="journal article" date="2004" name="Nature">
        <title>Genome evolution in yeasts.</title>
        <authorList>
            <person name="Dujon B."/>
            <person name="Sherman D."/>
            <person name="Fischer G."/>
            <person name="Durrens P."/>
            <person name="Casaregola S."/>
            <person name="Lafontaine I."/>
            <person name="de Montigny J."/>
            <person name="Marck C."/>
            <person name="Neuveglise C."/>
            <person name="Talla E."/>
            <person name="Goffard N."/>
            <person name="Frangeul L."/>
            <person name="Aigle M."/>
            <person name="Anthouard V."/>
            <person name="Babour A."/>
            <person name="Barbe V."/>
            <person name="Barnay S."/>
            <person name="Blanchin S."/>
            <person name="Beckerich J.-M."/>
            <person name="Beyne E."/>
            <person name="Bleykasten C."/>
            <person name="Boisrame A."/>
            <person name="Boyer J."/>
            <person name="Cattolico L."/>
            <person name="Confanioleri F."/>
            <person name="de Daruvar A."/>
            <person name="Despons L."/>
            <person name="Fabre E."/>
            <person name="Fairhead C."/>
            <person name="Ferry-Dumazet H."/>
            <person name="Groppi A."/>
            <person name="Hantraye F."/>
            <person name="Hennequin C."/>
            <person name="Jauniaux N."/>
            <person name="Joyet P."/>
            <person name="Kachouri R."/>
            <person name="Kerrest A."/>
            <person name="Koszul R."/>
            <person name="Lemaire M."/>
            <person name="Lesur I."/>
            <person name="Ma L."/>
            <person name="Muller H."/>
            <person name="Nicaud J.-M."/>
            <person name="Nikolski M."/>
            <person name="Oztas S."/>
            <person name="Ozier-Kalogeropoulos O."/>
            <person name="Pellenz S."/>
            <person name="Potier S."/>
            <person name="Richard G.-F."/>
            <person name="Straub M.-L."/>
            <person name="Suleau A."/>
            <person name="Swennen D."/>
            <person name="Tekaia F."/>
            <person name="Wesolowski-Louvel M."/>
            <person name="Westhof E."/>
            <person name="Wirth B."/>
            <person name="Zeniou-Meyer M."/>
            <person name="Zivanovic Y."/>
            <person name="Bolotin-Fukuhara M."/>
            <person name="Thierry A."/>
            <person name="Bouchier C."/>
            <person name="Caudron B."/>
            <person name="Scarpelli C."/>
            <person name="Gaillardin C."/>
            <person name="Weissenbach J."/>
            <person name="Wincker P."/>
            <person name="Souciet J.-L."/>
        </authorList>
    </citation>
    <scope>NUCLEOTIDE SEQUENCE [LARGE SCALE GENOMIC DNA]</scope>
    <source>
        <strain>ATCC 36239 / CBS 767 / BCRC 21394 / JCM 1990 / NBRC 0083 / IGC 2968</strain>
    </source>
</reference>
<organism>
    <name type="scientific">Debaryomyces hansenii (strain ATCC 36239 / CBS 767 / BCRC 21394 / JCM 1990 / NBRC 0083 / IGC 2968)</name>
    <name type="common">Yeast</name>
    <name type="synonym">Torulaspora hansenii</name>
    <dbReference type="NCBI Taxonomy" id="284592"/>
    <lineage>
        <taxon>Eukaryota</taxon>
        <taxon>Fungi</taxon>
        <taxon>Dikarya</taxon>
        <taxon>Ascomycota</taxon>
        <taxon>Saccharomycotina</taxon>
        <taxon>Pichiomycetes</taxon>
        <taxon>Debaryomycetaceae</taxon>
        <taxon>Debaryomyces</taxon>
    </lineage>
</organism>
<protein>
    <recommendedName>
        <fullName>GrpE protein homolog, mitochondrial</fullName>
    </recommendedName>
</protein>
<keyword id="KW-0143">Chaperone</keyword>
<keyword id="KW-0496">Mitochondrion</keyword>
<keyword id="KW-1185">Reference proteome</keyword>
<keyword id="KW-0809">Transit peptide</keyword>
<proteinExistence type="inferred from homology"/>